<name>RL7_ROSDO</name>
<keyword id="KW-1185">Reference proteome</keyword>
<keyword id="KW-0687">Ribonucleoprotein</keyword>
<keyword id="KW-0689">Ribosomal protein</keyword>
<comment type="function">
    <text evidence="1">Forms part of the ribosomal stalk which helps the ribosome interact with GTP-bound translation factors. Is thus essential for accurate translation.</text>
</comment>
<comment type="subunit">
    <text evidence="1">Homodimer. Part of the ribosomal stalk of the 50S ribosomal subunit. Forms a multimeric L10(L12)X complex, where L10 forms an elongated spine to which 2 to 4 L12 dimers bind in a sequential fashion. Binds GTP-bound translation factors.</text>
</comment>
<comment type="similarity">
    <text evidence="1">Belongs to the bacterial ribosomal protein bL12 family.</text>
</comment>
<proteinExistence type="inferred from homology"/>
<accession>Q160X6</accession>
<dbReference type="EMBL" id="CP000362">
    <property type="protein sequence ID" value="ABG33467.1"/>
    <property type="molecule type" value="Genomic_DNA"/>
</dbReference>
<dbReference type="RefSeq" id="WP_011570077.1">
    <property type="nucleotide sequence ID" value="NC_008209.1"/>
</dbReference>
<dbReference type="SMR" id="Q160X6"/>
<dbReference type="STRING" id="375451.RD1_4020"/>
<dbReference type="KEGG" id="rde:RD1_4020"/>
<dbReference type="eggNOG" id="COG0222">
    <property type="taxonomic scope" value="Bacteria"/>
</dbReference>
<dbReference type="HOGENOM" id="CLU_086499_3_0_5"/>
<dbReference type="OrthoDB" id="9811748at2"/>
<dbReference type="Proteomes" id="UP000007029">
    <property type="component" value="Chromosome"/>
</dbReference>
<dbReference type="GO" id="GO:0022625">
    <property type="term" value="C:cytosolic large ribosomal subunit"/>
    <property type="evidence" value="ECO:0007669"/>
    <property type="project" value="TreeGrafter"/>
</dbReference>
<dbReference type="GO" id="GO:0003729">
    <property type="term" value="F:mRNA binding"/>
    <property type="evidence" value="ECO:0007669"/>
    <property type="project" value="TreeGrafter"/>
</dbReference>
<dbReference type="GO" id="GO:0003735">
    <property type="term" value="F:structural constituent of ribosome"/>
    <property type="evidence" value="ECO:0007669"/>
    <property type="project" value="InterPro"/>
</dbReference>
<dbReference type="GO" id="GO:0006412">
    <property type="term" value="P:translation"/>
    <property type="evidence" value="ECO:0007669"/>
    <property type="project" value="UniProtKB-UniRule"/>
</dbReference>
<dbReference type="CDD" id="cd00387">
    <property type="entry name" value="Ribosomal_L7_L12"/>
    <property type="match status" value="1"/>
</dbReference>
<dbReference type="FunFam" id="3.30.1390.10:FF:000001">
    <property type="entry name" value="50S ribosomal protein L7/L12"/>
    <property type="match status" value="1"/>
</dbReference>
<dbReference type="Gene3D" id="3.30.1390.10">
    <property type="match status" value="1"/>
</dbReference>
<dbReference type="Gene3D" id="1.20.5.710">
    <property type="entry name" value="Single helix bin"/>
    <property type="match status" value="1"/>
</dbReference>
<dbReference type="HAMAP" id="MF_00368">
    <property type="entry name" value="Ribosomal_bL12"/>
    <property type="match status" value="1"/>
</dbReference>
<dbReference type="InterPro" id="IPR000206">
    <property type="entry name" value="Ribosomal_bL12"/>
</dbReference>
<dbReference type="InterPro" id="IPR013823">
    <property type="entry name" value="Ribosomal_bL12_C"/>
</dbReference>
<dbReference type="InterPro" id="IPR014719">
    <property type="entry name" value="Ribosomal_bL12_C/ClpS-like"/>
</dbReference>
<dbReference type="InterPro" id="IPR008932">
    <property type="entry name" value="Ribosomal_bL12_oligo"/>
</dbReference>
<dbReference type="InterPro" id="IPR036235">
    <property type="entry name" value="Ribosomal_bL12_oligo_N_sf"/>
</dbReference>
<dbReference type="NCBIfam" id="TIGR00855">
    <property type="entry name" value="L12"/>
    <property type="match status" value="1"/>
</dbReference>
<dbReference type="PANTHER" id="PTHR45987">
    <property type="entry name" value="39S RIBOSOMAL PROTEIN L12"/>
    <property type="match status" value="1"/>
</dbReference>
<dbReference type="PANTHER" id="PTHR45987:SF4">
    <property type="entry name" value="LARGE RIBOSOMAL SUBUNIT PROTEIN BL12M"/>
    <property type="match status" value="1"/>
</dbReference>
<dbReference type="Pfam" id="PF00542">
    <property type="entry name" value="Ribosomal_L12"/>
    <property type="match status" value="1"/>
</dbReference>
<dbReference type="Pfam" id="PF16320">
    <property type="entry name" value="Ribosomal_L12_N"/>
    <property type="match status" value="1"/>
</dbReference>
<dbReference type="SUPFAM" id="SSF54736">
    <property type="entry name" value="ClpS-like"/>
    <property type="match status" value="1"/>
</dbReference>
<dbReference type="SUPFAM" id="SSF48300">
    <property type="entry name" value="Ribosomal protein L7/12, oligomerisation (N-terminal) domain"/>
    <property type="match status" value="1"/>
</dbReference>
<organism>
    <name type="scientific">Roseobacter denitrificans (strain ATCC 33942 / OCh 114)</name>
    <name type="common">Erythrobacter sp. (strain OCh 114)</name>
    <name type="synonym">Roseobacter denitrificans</name>
    <dbReference type="NCBI Taxonomy" id="375451"/>
    <lineage>
        <taxon>Bacteria</taxon>
        <taxon>Pseudomonadati</taxon>
        <taxon>Pseudomonadota</taxon>
        <taxon>Alphaproteobacteria</taxon>
        <taxon>Rhodobacterales</taxon>
        <taxon>Roseobacteraceae</taxon>
        <taxon>Roseobacter</taxon>
    </lineage>
</organism>
<evidence type="ECO:0000255" key="1">
    <source>
        <dbReference type="HAMAP-Rule" id="MF_00368"/>
    </source>
</evidence>
<evidence type="ECO:0000305" key="2"/>
<reference key="1">
    <citation type="journal article" date="2007" name="J. Bacteriol.">
        <title>The complete genome sequence of Roseobacter denitrificans reveals a mixotrophic rather than photosynthetic metabolism.</title>
        <authorList>
            <person name="Swingley W.D."/>
            <person name="Sadekar S."/>
            <person name="Mastrian S.D."/>
            <person name="Matthies H.J."/>
            <person name="Hao J."/>
            <person name="Ramos H."/>
            <person name="Acharya C.R."/>
            <person name="Conrad A.L."/>
            <person name="Taylor H.L."/>
            <person name="Dejesa L.C."/>
            <person name="Shah M.K."/>
            <person name="O'Huallachain M.E."/>
            <person name="Lince M.T."/>
            <person name="Blankenship R.E."/>
            <person name="Beatty J.T."/>
            <person name="Touchman J.W."/>
        </authorList>
    </citation>
    <scope>NUCLEOTIDE SEQUENCE [LARGE SCALE GENOMIC DNA]</scope>
    <source>
        <strain>ATCC 33942 / OCh 114</strain>
    </source>
</reference>
<gene>
    <name evidence="1" type="primary">rplL</name>
    <name type="ordered locus">RD1_4020</name>
</gene>
<feature type="chain" id="PRO_1000007077" description="Large ribosomal subunit protein bL12">
    <location>
        <begin position="1"/>
        <end position="123"/>
    </location>
</feature>
<protein>
    <recommendedName>
        <fullName evidence="1">Large ribosomal subunit protein bL12</fullName>
    </recommendedName>
    <alternativeName>
        <fullName evidence="2">50S ribosomal protein L7/L12</fullName>
    </alternativeName>
</protein>
<sequence length="123" mass="12736">MADLKKLAEEIVGLTLLEAQELKTILKDEYGIEPAAGGAVMMAGPADAGAAEEEKTEFDVVLKSPGASKINVIKEVRGITGLGLKEAKDLVEAGGKIKEGCDKAEAEEIKGKLEAAGAEVELA</sequence>